<protein>
    <recommendedName>
        <fullName>Nucleolar transcription factor 1</fullName>
    </recommendedName>
    <alternativeName>
        <fullName>Upstream-binding factor 1</fullName>
        <shortName>UBF-1</shortName>
    </alternativeName>
</protein>
<keyword id="KW-0007">Acetylation</keyword>
<keyword id="KW-0010">Activator</keyword>
<keyword id="KW-0025">Alternative splicing</keyword>
<keyword id="KW-0238">DNA-binding</keyword>
<keyword id="KW-0539">Nucleus</keyword>
<keyword id="KW-0597">Phosphoprotein</keyword>
<keyword id="KW-1185">Reference proteome</keyword>
<keyword id="KW-0677">Repeat</keyword>
<keyword id="KW-0804">Transcription</keyword>
<keyword id="KW-0805">Transcription regulation</keyword>
<sequence length="764" mass="89437">MNGEADCPTDLEMAAPKGQDRWSQEDMLTLLECMKNNLPSNDSSKFKTTESHMDWEKVAFKDFSGDMCKLKWVEISNEVRKFRTLTELILDAQEHVKNPYKGKKLKKHPDFPKKPLTPYFRFFMEKRAKYAKLHPEMSNLDLTKILSKKYKELPEKKKMKYIQDFQREKQEFERNLARFREDHPDLIQNAKKSDIPEKPKTPQQLWYTHEKKVYLKVRPDATTKEVKDSLGKQWSQLSDKKRLKWIHKALEQRKEYEEIMRDYIQKHPELNISEEGITKSTLTKAERQLKDKFDGRPTKPPPNSYSLYCAELMANMKDVPSTERMVLCSQQWKLLSQKEKDAYHKKCDQKKKDYEVELLRFLESLPEEEQQRVLGEEKMLNINKKQTTSPASKKPSQEGGKGGSEKPKRPVSAMFIFSEEKRRQLQEERPELSESELTRLLARMWNDLSEKKKAKYKAREAALKAQSERKPGGEREDRGKLPESPKRAEEIWQQSVIGDYLARFKNDRVKALKAMEMTWNNMEKKEKLMWIKKAAEDQKRYERELSEMRAPPAATNSSKKMKFQGEPKKPPMNGYQKFSQELLSNGELNHLPLKERMVEIGSRWQRISQSQKEHYKKLAEEQQRQYKVHLDLWVKSLSPQDRAAYKEYISNKRKNMTKLRGPNPKSSRTTLQSKSESEEDDDEEDDDDDDEEEEEDDENGDSSEDGGDSSESSSEDESEDGDENEDDDDDEDDDEDDDEDEDNESEGSSSSSSSSGDSSDSDSN</sequence>
<dbReference type="EMBL" id="M61726">
    <property type="status" value="NOT_ANNOTATED_CDS"/>
    <property type="molecule type" value="mRNA"/>
</dbReference>
<dbReference type="EMBL" id="M61725">
    <property type="status" value="NOT_ANNOTATED_CDS"/>
    <property type="molecule type" value="mRNA"/>
</dbReference>
<dbReference type="PIR" id="A40439">
    <property type="entry name" value="A40439"/>
</dbReference>
<dbReference type="PIR" id="B40439">
    <property type="entry name" value="B40439"/>
</dbReference>
<dbReference type="RefSeq" id="NP_001099193.2">
    <molecule id="P25977-2"/>
    <property type="nucleotide sequence ID" value="NM_001105723.3"/>
</dbReference>
<dbReference type="RefSeq" id="NP_001121162.1">
    <molecule id="P25977-1"/>
    <property type="nucleotide sequence ID" value="NM_001127690.2"/>
</dbReference>
<dbReference type="RefSeq" id="XP_006247324.1">
    <molecule id="P25977-1"/>
    <property type="nucleotide sequence ID" value="XM_006247262.5"/>
</dbReference>
<dbReference type="RefSeq" id="XP_006247325.1">
    <property type="nucleotide sequence ID" value="XM_006247263.3"/>
</dbReference>
<dbReference type="RefSeq" id="XP_006247326.1">
    <molecule id="P25977-1"/>
    <property type="nucleotide sequence ID" value="XM_006247264.5"/>
</dbReference>
<dbReference type="RefSeq" id="XP_008766174.1">
    <property type="nucleotide sequence ID" value="XM_008767952.2"/>
</dbReference>
<dbReference type="RefSeq" id="XP_063124548.1">
    <molecule id="P25977-1"/>
    <property type="nucleotide sequence ID" value="XM_063268478.1"/>
</dbReference>
<dbReference type="RefSeq" id="XP_063124549.1">
    <molecule id="P25977-2"/>
    <property type="nucleotide sequence ID" value="XM_063268479.1"/>
</dbReference>
<dbReference type="RefSeq" id="XP_063124550.1">
    <molecule id="P25977-2"/>
    <property type="nucleotide sequence ID" value="XM_063268480.1"/>
</dbReference>
<dbReference type="RefSeq" id="XP_063124551.1">
    <molecule id="P25977-2"/>
    <property type="nucleotide sequence ID" value="XM_063268481.1"/>
</dbReference>
<dbReference type="BMRB" id="P25977"/>
<dbReference type="SMR" id="P25977"/>
<dbReference type="DIP" id="DIP-60265N"/>
<dbReference type="FunCoup" id="P25977">
    <property type="interactions" value="2944"/>
</dbReference>
<dbReference type="IntAct" id="P25977">
    <property type="interactions" value="2"/>
</dbReference>
<dbReference type="STRING" id="10116.ENSRNOP00000063740"/>
<dbReference type="iPTMnet" id="P25977"/>
<dbReference type="PhosphoSitePlus" id="P25977"/>
<dbReference type="jPOST" id="P25977"/>
<dbReference type="PaxDb" id="10116-ENSRNOP00000063740"/>
<dbReference type="Ensembl" id="ENSRNOT00000048418.5">
    <molecule id="P25977-2"/>
    <property type="protein sequence ID" value="ENSRNOP00000044305.3"/>
    <property type="gene ID" value="ENSRNOG00000020937.9"/>
</dbReference>
<dbReference type="Ensembl" id="ENSRNOT00000064283.4">
    <molecule id="P25977-1"/>
    <property type="protein sequence ID" value="ENSRNOP00000063740.1"/>
    <property type="gene ID" value="ENSRNOG00000020937.9"/>
</dbReference>
<dbReference type="GeneID" id="25574"/>
<dbReference type="KEGG" id="rno:25574"/>
<dbReference type="UCSC" id="RGD:3927">
    <molecule id="P25977-1"/>
    <property type="organism name" value="rat"/>
</dbReference>
<dbReference type="AGR" id="RGD:3927"/>
<dbReference type="CTD" id="7343"/>
<dbReference type="RGD" id="3927">
    <property type="gene designation" value="Ubtf"/>
</dbReference>
<dbReference type="eggNOG" id="KOG0381">
    <property type="taxonomic scope" value="Eukaryota"/>
</dbReference>
<dbReference type="GeneTree" id="ENSGT00940000161141"/>
<dbReference type="HOGENOM" id="CLU_021068_1_0_1"/>
<dbReference type="InParanoid" id="P25977"/>
<dbReference type="OMA" id="MCRMKWI"/>
<dbReference type="OrthoDB" id="1919336at2759"/>
<dbReference type="PhylomeDB" id="P25977"/>
<dbReference type="TreeFam" id="TF328989"/>
<dbReference type="Reactome" id="R-RNO-73728">
    <property type="pathway name" value="RNA Polymerase I Promoter Opening"/>
</dbReference>
<dbReference type="Reactome" id="R-RNO-73762">
    <property type="pathway name" value="RNA Polymerase I Transcription Initiation"/>
</dbReference>
<dbReference type="Reactome" id="R-RNO-73772">
    <property type="pathway name" value="RNA Polymerase I Promoter Escape"/>
</dbReference>
<dbReference type="Reactome" id="R-RNO-73863">
    <property type="pathway name" value="RNA Polymerase I Transcription Termination"/>
</dbReference>
<dbReference type="PRO" id="PR:P25977"/>
<dbReference type="Proteomes" id="UP000002494">
    <property type="component" value="Chromosome 10"/>
</dbReference>
<dbReference type="Bgee" id="ENSRNOG00000020937">
    <property type="expression patterns" value="Expressed in thymus and 20 other cell types or tissues"/>
</dbReference>
<dbReference type="GO" id="GO:0001650">
    <property type="term" value="C:fibrillar center"/>
    <property type="evidence" value="ECO:0000314"/>
    <property type="project" value="RGD"/>
</dbReference>
<dbReference type="GO" id="GO:0005730">
    <property type="term" value="C:nucleolus"/>
    <property type="evidence" value="ECO:0000250"/>
    <property type="project" value="UniProtKB"/>
</dbReference>
<dbReference type="GO" id="GO:0005634">
    <property type="term" value="C:nucleus"/>
    <property type="evidence" value="ECO:0000266"/>
    <property type="project" value="RGD"/>
</dbReference>
<dbReference type="GO" id="GO:0003682">
    <property type="term" value="F:chromatin binding"/>
    <property type="evidence" value="ECO:0000250"/>
    <property type="project" value="UniProtKB"/>
</dbReference>
<dbReference type="GO" id="GO:0001165">
    <property type="term" value="F:RNA polymerase I cis-regulatory region sequence-specific DNA binding"/>
    <property type="evidence" value="ECO:0000266"/>
    <property type="project" value="RGD"/>
</dbReference>
<dbReference type="GO" id="GO:0001164">
    <property type="term" value="F:RNA polymerase I core promoter sequence-specific DNA binding"/>
    <property type="evidence" value="ECO:0000266"/>
    <property type="project" value="RGD"/>
</dbReference>
<dbReference type="GO" id="GO:0001181">
    <property type="term" value="F:RNA polymerase I general transcription initiation factor activity"/>
    <property type="evidence" value="ECO:0000266"/>
    <property type="project" value="RGD"/>
</dbReference>
<dbReference type="GO" id="GO:0097110">
    <property type="term" value="F:scaffold protein binding"/>
    <property type="evidence" value="ECO:0000266"/>
    <property type="project" value="RGD"/>
</dbReference>
<dbReference type="GO" id="GO:1990830">
    <property type="term" value="P:cellular response to leukemia inhibitory factor"/>
    <property type="evidence" value="ECO:0000266"/>
    <property type="project" value="RGD"/>
</dbReference>
<dbReference type="GO" id="GO:0045943">
    <property type="term" value="P:positive regulation of transcription by RNA polymerase I"/>
    <property type="evidence" value="ECO:0000250"/>
    <property type="project" value="UniProtKB"/>
</dbReference>
<dbReference type="GO" id="GO:0006360">
    <property type="term" value="P:transcription by RNA polymerase I"/>
    <property type="evidence" value="ECO:0000266"/>
    <property type="project" value="RGD"/>
</dbReference>
<dbReference type="GO" id="GO:0006362">
    <property type="term" value="P:transcription elongation by RNA polymerase I"/>
    <property type="evidence" value="ECO:0000266"/>
    <property type="project" value="RGD"/>
</dbReference>
<dbReference type="GO" id="GO:0006361">
    <property type="term" value="P:transcription initiation at RNA polymerase I promoter"/>
    <property type="evidence" value="ECO:0000250"/>
    <property type="project" value="UniProtKB"/>
</dbReference>
<dbReference type="CDD" id="cd21998">
    <property type="entry name" value="HMG-box_UBF1_rpt1-like"/>
    <property type="match status" value="1"/>
</dbReference>
<dbReference type="CDD" id="cd21999">
    <property type="entry name" value="HMG-box_UBF1_rpt2"/>
    <property type="match status" value="1"/>
</dbReference>
<dbReference type="CDD" id="cd22000">
    <property type="entry name" value="HMG-box_UBF1_rpt3"/>
    <property type="match status" value="1"/>
</dbReference>
<dbReference type="CDD" id="cd22001">
    <property type="entry name" value="HMG-box_UBF1_rpt4"/>
    <property type="match status" value="1"/>
</dbReference>
<dbReference type="CDD" id="cd22002">
    <property type="entry name" value="HMG-box_UBF1_rpt5"/>
    <property type="match status" value="1"/>
</dbReference>
<dbReference type="CDD" id="cd22003">
    <property type="entry name" value="HMG-box_UBF1_rpt6-like"/>
    <property type="match status" value="1"/>
</dbReference>
<dbReference type="FunFam" id="1.10.30.10:FF:000021">
    <property type="entry name" value="nucleolar transcription factor 1 isoform X1"/>
    <property type="match status" value="1"/>
</dbReference>
<dbReference type="FunFam" id="1.10.30.10:FF:000033">
    <property type="entry name" value="nucleolar transcription factor 1 isoform X1"/>
    <property type="match status" value="1"/>
</dbReference>
<dbReference type="FunFam" id="1.10.30.10:FF:000019">
    <property type="entry name" value="nucleolar transcription factor 1 isoform X2"/>
    <property type="match status" value="1"/>
</dbReference>
<dbReference type="FunFam" id="1.10.30.10:FF:000022">
    <property type="entry name" value="nucleolar transcription factor 1 isoform X2"/>
    <property type="match status" value="1"/>
</dbReference>
<dbReference type="FunFam" id="1.10.30.10:FF:000023">
    <property type="entry name" value="nucleolar transcription factor 1 isoform X2"/>
    <property type="match status" value="1"/>
</dbReference>
<dbReference type="FunFam" id="1.10.30.10:FF:000029">
    <property type="entry name" value="nucleolar transcription factor 1 isoform X2"/>
    <property type="match status" value="1"/>
</dbReference>
<dbReference type="Gene3D" id="1.10.30.10">
    <property type="entry name" value="High mobility group box domain"/>
    <property type="match status" value="6"/>
</dbReference>
<dbReference type="InterPro" id="IPR029215">
    <property type="entry name" value="HMG_box_5"/>
</dbReference>
<dbReference type="InterPro" id="IPR009071">
    <property type="entry name" value="HMG_box_dom"/>
</dbReference>
<dbReference type="InterPro" id="IPR036910">
    <property type="entry name" value="HMG_box_dom_sf"/>
</dbReference>
<dbReference type="InterPro" id="IPR051762">
    <property type="entry name" value="UBF1"/>
</dbReference>
<dbReference type="PANTHER" id="PTHR46318:SF4">
    <property type="entry name" value="NUCLEOLAR TRANSCRIPTION FACTOR 1"/>
    <property type="match status" value="1"/>
</dbReference>
<dbReference type="PANTHER" id="PTHR46318">
    <property type="entry name" value="UPSTREAM BINDING TRANSCRIPTION FACTOR"/>
    <property type="match status" value="1"/>
</dbReference>
<dbReference type="Pfam" id="PF00505">
    <property type="entry name" value="HMG_box"/>
    <property type="match status" value="3"/>
</dbReference>
<dbReference type="Pfam" id="PF09011">
    <property type="entry name" value="HMG_box_2"/>
    <property type="match status" value="1"/>
</dbReference>
<dbReference type="Pfam" id="PF14887">
    <property type="entry name" value="HMG_box_5"/>
    <property type="match status" value="1"/>
</dbReference>
<dbReference type="SMART" id="SM00398">
    <property type="entry name" value="HMG"/>
    <property type="match status" value="6"/>
</dbReference>
<dbReference type="SUPFAM" id="SSF47095">
    <property type="entry name" value="HMG-box"/>
    <property type="match status" value="6"/>
</dbReference>
<dbReference type="PROSITE" id="PS50118">
    <property type="entry name" value="HMG_BOX_2"/>
    <property type="match status" value="6"/>
</dbReference>
<proteinExistence type="evidence at protein level"/>
<name>UBF1_RAT</name>
<comment type="function">
    <text evidence="2">Recognizes the ribosomal RNA gene promoter and activates transcription mediated by RNA polymerase I through cooperative interactions with the transcription factor SL1/TIF-IB complex. It binds specifically to the upstream control element (By similarity).</text>
</comment>
<comment type="subunit">
    <text evidence="1 2 5 6">Homodimer (PubMed:10099786). Part of Pol I pre-initiation complex (PIC), in which Pol I core assembles with RRN3 and promoter-bound UTBF and SL1/TIF-IB complex (By similarity). Interacts with TOP2A in the context of Pol I complex (By similarity). Interacts with TBP (By similarity). Interacts with TAF1A (By similarity). Interacts with PHF6 (By similarity). Interacts with CEBPA (isoform 1 and isoform 4) (PubMed:20075868). Interacts with DDX11 (By similarity). Interacts with NOP53 (By similarity). Interacts with RASL11A (By similarity). Interacts with DHX33 (By similarity). Binds to IRS1 and PIK3CA (By similarity). Interacts with ALKBH2.</text>
</comment>
<comment type="interaction">
    <interactant intactId="EBI-15620127">
        <id>P25977</id>
    </interactant>
    <interactant intactId="EBI-6119952">
        <id>Q9Z2J9</id>
        <label>Runx2</label>
    </interactant>
    <organismsDiffer>false</organismsDiffer>
    <experiments>2</experiments>
</comment>
<comment type="subcellular location">
    <subcellularLocation>
        <location evidence="2">Nucleus</location>
        <location evidence="2">Nucleolus</location>
    </subcellularLocation>
</comment>
<comment type="alternative products">
    <event type="alternative splicing"/>
    <isoform>
        <id>P25977-1</id>
        <name>UBF1</name>
        <name>Long</name>
        <sequence type="displayed"/>
    </isoform>
    <isoform>
        <id>P25977-2</id>
        <name>UBF2</name>
        <name>Short</name>
        <sequence type="described" ref="VSP_002195"/>
    </isoform>
</comment>
<comment type="PTM">
    <text evidence="2">Phosphorylated and activated by PIK3CA.</text>
</comment>
<organism>
    <name type="scientific">Rattus norvegicus</name>
    <name type="common">Rat</name>
    <dbReference type="NCBI Taxonomy" id="10116"/>
    <lineage>
        <taxon>Eukaryota</taxon>
        <taxon>Metazoa</taxon>
        <taxon>Chordata</taxon>
        <taxon>Craniata</taxon>
        <taxon>Vertebrata</taxon>
        <taxon>Euteleostomi</taxon>
        <taxon>Mammalia</taxon>
        <taxon>Eutheria</taxon>
        <taxon>Euarchontoglires</taxon>
        <taxon>Glires</taxon>
        <taxon>Rodentia</taxon>
        <taxon>Myomorpha</taxon>
        <taxon>Muroidea</taxon>
        <taxon>Muridae</taxon>
        <taxon>Murinae</taxon>
        <taxon>Rattus</taxon>
    </lineage>
</organism>
<evidence type="ECO:0000250" key="1">
    <source>
        <dbReference type="UniProtKB" id="P17480"/>
    </source>
</evidence>
<evidence type="ECO:0000250" key="2">
    <source>
        <dbReference type="UniProtKB" id="P25976"/>
    </source>
</evidence>
<evidence type="ECO:0000255" key="3">
    <source>
        <dbReference type="PROSITE-ProRule" id="PRU00267"/>
    </source>
</evidence>
<evidence type="ECO:0000256" key="4">
    <source>
        <dbReference type="SAM" id="MobiDB-lite"/>
    </source>
</evidence>
<evidence type="ECO:0000269" key="5">
    <source>
    </source>
</evidence>
<evidence type="ECO:0000269" key="6">
    <source>
    </source>
</evidence>
<evidence type="ECO:0000305" key="7"/>
<gene>
    <name type="primary">Ubtf</name>
    <name type="synonym">Tcfubf</name>
    <name type="synonym">Ubf-1</name>
</gene>
<feature type="chain" id="PRO_0000048627" description="Nucleolar transcription factor 1">
    <location>
        <begin position="1"/>
        <end position="764"/>
    </location>
</feature>
<feature type="DNA-binding region" description="HMG box 1" evidence="3">
    <location>
        <begin position="112"/>
        <end position="180"/>
    </location>
</feature>
<feature type="DNA-binding region" description="HMG box 2" evidence="3">
    <location>
        <begin position="196"/>
        <end position="264"/>
    </location>
</feature>
<feature type="DNA-binding region" description="HMG box 3" evidence="3">
    <location>
        <begin position="298"/>
        <end position="362"/>
    </location>
</feature>
<feature type="DNA-binding region" description="HMG box 4" evidence="3">
    <location>
        <begin position="407"/>
        <end position="475"/>
    </location>
</feature>
<feature type="DNA-binding region" description="HMG box 5" evidence="3">
    <location>
        <begin position="482"/>
        <end position="549"/>
    </location>
</feature>
<feature type="DNA-binding region" description="HMG box 6" evidence="3">
    <location>
        <begin position="568"/>
        <end position="634"/>
    </location>
</feature>
<feature type="region of interest" description="Disordered" evidence="4">
    <location>
        <begin position="1"/>
        <end position="21"/>
    </location>
</feature>
<feature type="region of interest" description="Disordered" evidence="4">
    <location>
        <begin position="370"/>
        <end position="411"/>
    </location>
</feature>
<feature type="region of interest" description="Disordered" evidence="4">
    <location>
        <begin position="456"/>
        <end position="488"/>
    </location>
</feature>
<feature type="region of interest" description="Disordered" evidence="4">
    <location>
        <begin position="546"/>
        <end position="576"/>
    </location>
</feature>
<feature type="region of interest" description="Disordered" evidence="4">
    <location>
        <begin position="648"/>
        <end position="764"/>
    </location>
</feature>
<feature type="compositionally biased region" description="Basic and acidic residues" evidence="4">
    <location>
        <begin position="370"/>
        <end position="379"/>
    </location>
</feature>
<feature type="compositionally biased region" description="Basic and acidic residues" evidence="4">
    <location>
        <begin position="457"/>
        <end position="488"/>
    </location>
</feature>
<feature type="compositionally biased region" description="Polar residues" evidence="4">
    <location>
        <begin position="664"/>
        <end position="674"/>
    </location>
</feature>
<feature type="compositionally biased region" description="Acidic residues" evidence="4">
    <location>
        <begin position="677"/>
        <end position="745"/>
    </location>
</feature>
<feature type="compositionally biased region" description="Low complexity" evidence="4">
    <location>
        <begin position="746"/>
        <end position="758"/>
    </location>
</feature>
<feature type="modified residue" description="N-acetylmethionine" evidence="1">
    <location>
        <position position="1"/>
    </location>
</feature>
<feature type="modified residue" description="Phosphothreonine" evidence="1">
    <location>
        <position position="201"/>
    </location>
</feature>
<feature type="modified residue" description="Phosphoserine" evidence="1">
    <location>
        <position position="273"/>
    </location>
</feature>
<feature type="modified residue" description="Phosphoserine" evidence="2">
    <location>
        <position position="336"/>
    </location>
</feature>
<feature type="modified residue" description="Phosphoserine" evidence="1">
    <location>
        <position position="364"/>
    </location>
</feature>
<feature type="modified residue" description="Phosphoserine" evidence="2">
    <location>
        <position position="389"/>
    </location>
</feature>
<feature type="modified residue" description="Phosphoserine" evidence="1">
    <location>
        <position position="412"/>
    </location>
</feature>
<feature type="modified residue" description="Phosphoserine" evidence="2">
    <location>
        <position position="433"/>
    </location>
</feature>
<feature type="modified residue" description="Phosphoserine" evidence="1">
    <location>
        <position position="435"/>
    </location>
</feature>
<feature type="modified residue" description="Phosphoserine" evidence="1">
    <location>
        <position position="484"/>
    </location>
</feature>
<feature type="modified residue" description="Phosphoserine" evidence="1">
    <location>
        <position position="495"/>
    </location>
</feature>
<feature type="modified residue" description="Phosphoserine" evidence="2">
    <location>
        <position position="546"/>
    </location>
</feature>
<feature type="modified residue" description="Phosphoserine" evidence="2">
    <location>
        <position position="584"/>
    </location>
</feature>
<feature type="modified residue" description="Phosphoserine" evidence="1">
    <location>
        <position position="638"/>
    </location>
</feature>
<feature type="splice variant" id="VSP_002195" description="In isoform UBF2." evidence="7">
    <location>
        <begin position="221"/>
        <end position="257"/>
    </location>
</feature>
<accession>P25977</accession>
<accession>P25978</accession>
<reference key="1">
    <citation type="journal article" date="1991" name="Proc. Natl. Acad. Sci. U.S.A.">
        <title>Identification of two forms of the RNA polymerase I transcription factor UBF.</title>
        <authorList>
            <person name="O'Mahony D.J."/>
            <person name="Rothblum L.I."/>
        </authorList>
    </citation>
    <scope>NUCLEOTIDE SEQUENCE [MRNA] (UBF1 AND UBF2)</scope>
</reference>
<reference key="2">
    <citation type="journal article" date="1998" name="Biochem. Cell Biol.">
        <title>Topology of recombinant rat upstream binding factor.</title>
        <authorList>
            <person name="Ridsdale R.A."/>
            <person name="Semotok J.L."/>
            <person name="Larson D.E."/>
            <person name="Rothblum L.I."/>
            <person name="Harauz G."/>
        </authorList>
    </citation>
    <scope>SUBUNIT</scope>
</reference>
<reference key="3">
    <citation type="journal article" date="2010" name="EMBO J.">
        <title>Nucleolar retention of a translational C/EBPalpha isoform stimulates rDNA transcription and cell size.</title>
        <authorList>
            <person name="Muller C."/>
            <person name="Bremer A."/>
            <person name="Schreiber S."/>
            <person name="Eichwald S."/>
            <person name="Calkhoven C.F."/>
        </authorList>
    </citation>
    <scope>INTERACTION WITH CEBPA</scope>
</reference>